<accession>Q8ZLN0</accession>
<organism>
    <name type="scientific">Salmonella typhimurium (strain LT2 / SGSC1412 / ATCC 700720)</name>
    <dbReference type="NCBI Taxonomy" id="99287"/>
    <lineage>
        <taxon>Bacteria</taxon>
        <taxon>Pseudomonadati</taxon>
        <taxon>Pseudomonadota</taxon>
        <taxon>Gammaproteobacteria</taxon>
        <taxon>Enterobacterales</taxon>
        <taxon>Enterobacteriaceae</taxon>
        <taxon>Salmonella</taxon>
    </lineage>
</organism>
<sequence length="190" mass="20364">MNNNLPIGSIAAAVDLLNKENVIAYPTEAVFGVGCDPDSETAVTRLLALKQRPVDKGLILIAASFEQLKPYIDDSILTAAQRKAVFDCWPGPVTFVFPAPATTPRWLTGRFDSLAVRVTNHPLVVALCNAYGKPLVSTSANLSGLPPCRTVEEVRAQFGDDFPVVEGATGGRLNPSEIRDALTGELFRQG</sequence>
<reference key="1">
    <citation type="journal article" date="2001" name="Nature">
        <title>Complete genome sequence of Salmonella enterica serovar Typhimurium LT2.</title>
        <authorList>
            <person name="McClelland M."/>
            <person name="Sanderson K.E."/>
            <person name="Spieth J."/>
            <person name="Clifton S.W."/>
            <person name="Latreille P."/>
            <person name="Courtney L."/>
            <person name="Porwollik S."/>
            <person name="Ali J."/>
            <person name="Dante M."/>
            <person name="Du F."/>
            <person name="Hou S."/>
            <person name="Layman D."/>
            <person name="Leonard S."/>
            <person name="Nguyen C."/>
            <person name="Scott K."/>
            <person name="Holmes A."/>
            <person name="Grewal N."/>
            <person name="Mulvaney E."/>
            <person name="Ryan E."/>
            <person name="Sun H."/>
            <person name="Florea L."/>
            <person name="Miller W."/>
            <person name="Stoneking T."/>
            <person name="Nhan M."/>
            <person name="Waterston R."/>
            <person name="Wilson R.K."/>
        </authorList>
    </citation>
    <scope>NUCLEOTIDE SEQUENCE [LARGE SCALE GENOMIC DNA]</scope>
    <source>
        <strain>LT2 / SGSC1412 / ATCC 700720</strain>
    </source>
</reference>
<evidence type="ECO:0000255" key="1">
    <source>
        <dbReference type="HAMAP-Rule" id="MF_01852"/>
    </source>
</evidence>
<comment type="function">
    <text evidence="1">Required for the formation of a threonylcarbamoyl group on adenosine at position 37 (t(6)A37) in tRNAs that read codons beginning with adenine. Catalyzes the conversion of L-threonine, HCO(3)(-)/CO(2) and ATP to give threonylcarbamoyl-AMP (TC-AMP) as the acyladenylate intermediate, with the release of diphosphate.</text>
</comment>
<comment type="catalytic activity">
    <reaction evidence="1">
        <text>L-threonine + hydrogencarbonate + ATP = L-threonylcarbamoyladenylate + diphosphate + H2O</text>
        <dbReference type="Rhea" id="RHEA:36407"/>
        <dbReference type="ChEBI" id="CHEBI:15377"/>
        <dbReference type="ChEBI" id="CHEBI:17544"/>
        <dbReference type="ChEBI" id="CHEBI:30616"/>
        <dbReference type="ChEBI" id="CHEBI:33019"/>
        <dbReference type="ChEBI" id="CHEBI:57926"/>
        <dbReference type="ChEBI" id="CHEBI:73682"/>
        <dbReference type="EC" id="2.7.7.87"/>
    </reaction>
</comment>
<comment type="subcellular location">
    <subcellularLocation>
        <location evidence="1">Cytoplasm</location>
    </subcellularLocation>
</comment>
<comment type="similarity">
    <text evidence="1">Belongs to the SUA5 family. TsaC subfamily.</text>
</comment>
<keyword id="KW-0067">ATP-binding</keyword>
<keyword id="KW-0963">Cytoplasm</keyword>
<keyword id="KW-0547">Nucleotide-binding</keyword>
<keyword id="KW-0548">Nucleotidyltransferase</keyword>
<keyword id="KW-1185">Reference proteome</keyword>
<keyword id="KW-0808">Transferase</keyword>
<keyword id="KW-0819">tRNA processing</keyword>
<feature type="chain" id="PRO_0000352972" description="Threonylcarbamoyl-AMP synthase">
    <location>
        <begin position="1"/>
        <end position="190"/>
    </location>
</feature>
<feature type="domain" description="YrdC-like" evidence="1">
    <location>
        <begin position="7"/>
        <end position="190"/>
    </location>
</feature>
<name>TSAC_SALTY</name>
<proteinExistence type="inferred from homology"/>
<gene>
    <name evidence="1" type="primary">tsaC</name>
    <name type="synonym">rimN</name>
    <name type="ordered locus">STM3402</name>
</gene>
<protein>
    <recommendedName>
        <fullName evidence="1">Threonylcarbamoyl-AMP synthase</fullName>
        <shortName evidence="1">TC-AMP synthase</shortName>
        <ecNumber evidence="1">2.7.7.87</ecNumber>
    </recommendedName>
    <alternativeName>
        <fullName evidence="1">L-threonylcarbamoyladenylate synthase</fullName>
    </alternativeName>
    <alternativeName>
        <fullName evidence="1">t(6)A37 threonylcarbamoyladenosine biosynthesis protein TsaC</fullName>
    </alternativeName>
    <alternativeName>
        <fullName evidence="1">tRNA threonylcarbamoyladenosine biosynthesis protein TsaC</fullName>
    </alternativeName>
</protein>
<dbReference type="EC" id="2.7.7.87" evidence="1"/>
<dbReference type="EMBL" id="AE006468">
    <property type="protein sequence ID" value="AAL22265.1"/>
    <property type="molecule type" value="Genomic_DNA"/>
</dbReference>
<dbReference type="RefSeq" id="WP_001063609.1">
    <property type="nucleotide sequence ID" value="NC_003197.2"/>
</dbReference>
<dbReference type="SMR" id="Q8ZLN0"/>
<dbReference type="STRING" id="99287.STM3402"/>
<dbReference type="PaxDb" id="99287-STM3402"/>
<dbReference type="KEGG" id="stm:STM3402"/>
<dbReference type="PATRIC" id="fig|99287.12.peg.3600"/>
<dbReference type="HOGENOM" id="CLU_031397_6_0_6"/>
<dbReference type="OMA" id="LVDAFWP"/>
<dbReference type="PhylomeDB" id="Q8ZLN0"/>
<dbReference type="BioCyc" id="SENT99287:STM3402-MONOMER"/>
<dbReference type="Proteomes" id="UP000001014">
    <property type="component" value="Chromosome"/>
</dbReference>
<dbReference type="GO" id="GO:0005737">
    <property type="term" value="C:cytoplasm"/>
    <property type="evidence" value="ECO:0000318"/>
    <property type="project" value="GO_Central"/>
</dbReference>
<dbReference type="GO" id="GO:0005524">
    <property type="term" value="F:ATP binding"/>
    <property type="evidence" value="ECO:0007669"/>
    <property type="project" value="UniProtKB-UniRule"/>
</dbReference>
<dbReference type="GO" id="GO:0003725">
    <property type="term" value="F:double-stranded RNA binding"/>
    <property type="evidence" value="ECO:0007669"/>
    <property type="project" value="InterPro"/>
</dbReference>
<dbReference type="GO" id="GO:0061710">
    <property type="term" value="F:L-threonylcarbamoyladenylate synthase"/>
    <property type="evidence" value="ECO:0007669"/>
    <property type="project" value="UniProtKB-EC"/>
</dbReference>
<dbReference type="GO" id="GO:0016779">
    <property type="term" value="F:nucleotidyltransferase activity"/>
    <property type="evidence" value="ECO:0000318"/>
    <property type="project" value="GO_Central"/>
</dbReference>
<dbReference type="GO" id="GO:0000049">
    <property type="term" value="F:tRNA binding"/>
    <property type="evidence" value="ECO:0000318"/>
    <property type="project" value="GO_Central"/>
</dbReference>
<dbReference type="GO" id="GO:0006450">
    <property type="term" value="P:regulation of translational fidelity"/>
    <property type="evidence" value="ECO:0000318"/>
    <property type="project" value="GO_Central"/>
</dbReference>
<dbReference type="GO" id="GO:0002949">
    <property type="term" value="P:tRNA threonylcarbamoyladenosine modification"/>
    <property type="evidence" value="ECO:0007669"/>
    <property type="project" value="UniProtKB-UniRule"/>
</dbReference>
<dbReference type="FunFam" id="3.90.870.10:FF:000004">
    <property type="entry name" value="Threonylcarbamoyl-AMP synthase"/>
    <property type="match status" value="1"/>
</dbReference>
<dbReference type="Gene3D" id="3.90.870.10">
    <property type="entry name" value="DHBP synthase"/>
    <property type="match status" value="1"/>
</dbReference>
<dbReference type="HAMAP" id="MF_01852">
    <property type="entry name" value="TsaC"/>
    <property type="match status" value="1"/>
</dbReference>
<dbReference type="InterPro" id="IPR017945">
    <property type="entry name" value="DHBP_synth_RibB-like_a/b_dom"/>
</dbReference>
<dbReference type="InterPro" id="IPR006070">
    <property type="entry name" value="Sua5-like_dom"/>
</dbReference>
<dbReference type="InterPro" id="IPR023535">
    <property type="entry name" value="TC-AMP_synthase"/>
</dbReference>
<dbReference type="InterPro" id="IPR050156">
    <property type="entry name" value="TC-AMP_synthase_SUA5"/>
</dbReference>
<dbReference type="NCBIfam" id="NF007919">
    <property type="entry name" value="PRK10634.1"/>
    <property type="match status" value="1"/>
</dbReference>
<dbReference type="PANTHER" id="PTHR17490">
    <property type="entry name" value="SUA5"/>
    <property type="match status" value="1"/>
</dbReference>
<dbReference type="PANTHER" id="PTHR17490:SF18">
    <property type="entry name" value="THREONYLCARBAMOYL-AMP SYNTHASE"/>
    <property type="match status" value="1"/>
</dbReference>
<dbReference type="Pfam" id="PF01300">
    <property type="entry name" value="Sua5_yciO_yrdC"/>
    <property type="match status" value="1"/>
</dbReference>
<dbReference type="SUPFAM" id="SSF55821">
    <property type="entry name" value="YrdC/RibB"/>
    <property type="match status" value="1"/>
</dbReference>
<dbReference type="PROSITE" id="PS51163">
    <property type="entry name" value="YRDC"/>
    <property type="match status" value="1"/>
</dbReference>